<proteinExistence type="inferred from homology"/>
<evidence type="ECO:0000255" key="1">
    <source>
        <dbReference type="HAMAP-Rule" id="MF_00687"/>
    </source>
</evidence>
<protein>
    <recommendedName>
        <fullName evidence="1">4-deoxy-L-threo-5-hexosulose-uronate ketol-isomerase</fullName>
        <ecNumber evidence="1">5.3.1.17</ecNumber>
    </recommendedName>
    <alternativeName>
        <fullName evidence="1">5-keto-4-deoxyuronate isomerase</fullName>
    </alternativeName>
    <alternativeName>
        <fullName evidence="1">DKI isomerase</fullName>
    </alternativeName>
</protein>
<keyword id="KW-0413">Isomerase</keyword>
<keyword id="KW-0479">Metal-binding</keyword>
<keyword id="KW-0862">Zinc</keyword>
<feature type="chain" id="PRO_1000131884" description="4-deoxy-L-threo-5-hexosulose-uronate ketol-isomerase">
    <location>
        <begin position="1"/>
        <end position="278"/>
    </location>
</feature>
<feature type="binding site" evidence="1">
    <location>
        <position position="196"/>
    </location>
    <ligand>
        <name>Zn(2+)</name>
        <dbReference type="ChEBI" id="CHEBI:29105"/>
    </ligand>
</feature>
<feature type="binding site" evidence="1">
    <location>
        <position position="198"/>
    </location>
    <ligand>
        <name>Zn(2+)</name>
        <dbReference type="ChEBI" id="CHEBI:29105"/>
    </ligand>
</feature>
<feature type="binding site" evidence="1">
    <location>
        <position position="203"/>
    </location>
    <ligand>
        <name>Zn(2+)</name>
        <dbReference type="ChEBI" id="CHEBI:29105"/>
    </ligand>
</feature>
<feature type="binding site" evidence="1">
    <location>
        <position position="245"/>
    </location>
    <ligand>
        <name>Zn(2+)</name>
        <dbReference type="ChEBI" id="CHEBI:29105"/>
    </ligand>
</feature>
<dbReference type="EC" id="5.3.1.17" evidence="1"/>
<dbReference type="EMBL" id="AP009240">
    <property type="protein sequence ID" value="BAG78624.1"/>
    <property type="molecule type" value="Genomic_DNA"/>
</dbReference>
<dbReference type="RefSeq" id="WP_000383224.1">
    <property type="nucleotide sequence ID" value="NC_011415.1"/>
</dbReference>
<dbReference type="SMR" id="B6I6W8"/>
<dbReference type="KEGG" id="ecy:ECSE_3100"/>
<dbReference type="HOGENOM" id="CLU_062609_0_0_6"/>
<dbReference type="UniPathway" id="UPA00545">
    <property type="reaction ID" value="UER00826"/>
</dbReference>
<dbReference type="Proteomes" id="UP000008199">
    <property type="component" value="Chromosome"/>
</dbReference>
<dbReference type="GO" id="GO:0008697">
    <property type="term" value="F:4-deoxy-L-threo-5-hexosulose-uronate ketol-isomerase activity"/>
    <property type="evidence" value="ECO:0007669"/>
    <property type="project" value="UniProtKB-UniRule"/>
</dbReference>
<dbReference type="GO" id="GO:0008270">
    <property type="term" value="F:zinc ion binding"/>
    <property type="evidence" value="ECO:0007669"/>
    <property type="project" value="UniProtKB-UniRule"/>
</dbReference>
<dbReference type="GO" id="GO:0019698">
    <property type="term" value="P:D-galacturonate catabolic process"/>
    <property type="evidence" value="ECO:0007669"/>
    <property type="project" value="TreeGrafter"/>
</dbReference>
<dbReference type="GO" id="GO:0042840">
    <property type="term" value="P:D-glucuronate catabolic process"/>
    <property type="evidence" value="ECO:0007669"/>
    <property type="project" value="TreeGrafter"/>
</dbReference>
<dbReference type="GO" id="GO:0045490">
    <property type="term" value="P:pectin catabolic process"/>
    <property type="evidence" value="ECO:0007669"/>
    <property type="project" value="UniProtKB-UniRule"/>
</dbReference>
<dbReference type="CDD" id="cd20491">
    <property type="entry name" value="cupin_KduI_C"/>
    <property type="match status" value="1"/>
</dbReference>
<dbReference type="CDD" id="cd20294">
    <property type="entry name" value="cupin_KduI_N"/>
    <property type="match status" value="1"/>
</dbReference>
<dbReference type="FunFam" id="2.60.120.10:FF:000018">
    <property type="entry name" value="4-deoxy-L-threo-5-hexosulose-uronate ketol-isomerase"/>
    <property type="match status" value="1"/>
</dbReference>
<dbReference type="FunFam" id="2.60.120.520:FF:000001">
    <property type="entry name" value="4-deoxy-L-threo-5-hexosulose-uronate ketol-isomerase"/>
    <property type="match status" value="1"/>
</dbReference>
<dbReference type="Gene3D" id="2.60.120.10">
    <property type="entry name" value="Jelly Rolls"/>
    <property type="match status" value="1"/>
</dbReference>
<dbReference type="Gene3D" id="2.60.120.520">
    <property type="entry name" value="pectin degrading enzyme 5-keto 4- deoxyuronate isomerase, domain 1"/>
    <property type="match status" value="1"/>
</dbReference>
<dbReference type="HAMAP" id="MF_00687">
    <property type="entry name" value="KduI"/>
    <property type="match status" value="1"/>
</dbReference>
<dbReference type="InterPro" id="IPR007045">
    <property type="entry name" value="KduI"/>
</dbReference>
<dbReference type="InterPro" id="IPR021120">
    <property type="entry name" value="KduI/IolB_isomerase"/>
</dbReference>
<dbReference type="InterPro" id="IPR027449">
    <property type="entry name" value="KduI_N"/>
</dbReference>
<dbReference type="InterPro" id="IPR014710">
    <property type="entry name" value="RmlC-like_jellyroll"/>
</dbReference>
<dbReference type="InterPro" id="IPR011051">
    <property type="entry name" value="RmlC_Cupin_sf"/>
</dbReference>
<dbReference type="NCBIfam" id="NF002091">
    <property type="entry name" value="PRK00924.1"/>
    <property type="match status" value="1"/>
</dbReference>
<dbReference type="PANTHER" id="PTHR38461">
    <property type="entry name" value="4-DEOXY-L-THREO-5-HEXOSULOSE-URONATE KETOL-ISOMERASE"/>
    <property type="match status" value="1"/>
</dbReference>
<dbReference type="PANTHER" id="PTHR38461:SF1">
    <property type="entry name" value="4-DEOXY-L-THREO-5-HEXOSULOSE-URONATE KETOL-ISOMERASE"/>
    <property type="match status" value="1"/>
</dbReference>
<dbReference type="Pfam" id="PF04962">
    <property type="entry name" value="KduI"/>
    <property type="match status" value="1"/>
</dbReference>
<dbReference type="PIRSF" id="PIRSF006625">
    <property type="entry name" value="KduI"/>
    <property type="match status" value="1"/>
</dbReference>
<dbReference type="SUPFAM" id="SSF51182">
    <property type="entry name" value="RmlC-like cupins"/>
    <property type="match status" value="1"/>
</dbReference>
<gene>
    <name evidence="1" type="primary">kduI</name>
    <name type="ordered locus">ECSE_3100</name>
</gene>
<reference key="1">
    <citation type="journal article" date="2008" name="DNA Res.">
        <title>Complete genome sequence and comparative analysis of the wild-type commensal Escherichia coli strain SE11 isolated from a healthy adult.</title>
        <authorList>
            <person name="Oshima K."/>
            <person name="Toh H."/>
            <person name="Ogura Y."/>
            <person name="Sasamoto H."/>
            <person name="Morita H."/>
            <person name="Park S.-H."/>
            <person name="Ooka T."/>
            <person name="Iyoda S."/>
            <person name="Taylor T.D."/>
            <person name="Hayashi T."/>
            <person name="Itoh K."/>
            <person name="Hattori M."/>
        </authorList>
    </citation>
    <scope>NUCLEOTIDE SEQUENCE [LARGE SCALE GENOMIC DNA]</scope>
    <source>
        <strain>SE11</strain>
    </source>
</reference>
<organism>
    <name type="scientific">Escherichia coli (strain SE11)</name>
    <dbReference type="NCBI Taxonomy" id="409438"/>
    <lineage>
        <taxon>Bacteria</taxon>
        <taxon>Pseudomonadati</taxon>
        <taxon>Pseudomonadota</taxon>
        <taxon>Gammaproteobacteria</taxon>
        <taxon>Enterobacterales</taxon>
        <taxon>Enterobacteriaceae</taxon>
        <taxon>Escherichia</taxon>
    </lineage>
</organism>
<comment type="function">
    <text evidence="1">Catalyzes the isomerization of 5-dehydro-4-deoxy-D-glucuronate to 3-deoxy-D-glycero-2,5-hexodiulosonate.</text>
</comment>
<comment type="catalytic activity">
    <reaction evidence="1">
        <text>5-dehydro-4-deoxy-D-glucuronate = 3-deoxy-D-glycero-2,5-hexodiulosonate</text>
        <dbReference type="Rhea" id="RHEA:23896"/>
        <dbReference type="ChEBI" id="CHEBI:17117"/>
        <dbReference type="ChEBI" id="CHEBI:29071"/>
        <dbReference type="EC" id="5.3.1.17"/>
    </reaction>
</comment>
<comment type="cofactor">
    <cofactor evidence="1">
        <name>Zn(2+)</name>
        <dbReference type="ChEBI" id="CHEBI:29105"/>
    </cofactor>
    <text evidence="1">Binds 1 zinc ion per subunit.</text>
</comment>
<comment type="pathway">
    <text evidence="1">Glycan metabolism; pectin degradation; 2-dehydro-3-deoxy-D-gluconate from pectin: step 4/5.</text>
</comment>
<comment type="subunit">
    <text evidence="1">Homohexamer.</text>
</comment>
<comment type="similarity">
    <text evidence="1">Belongs to the KduI family.</text>
</comment>
<accession>B6I6W8</accession>
<name>KDUI_ECOSE</name>
<sequence length="278" mass="31091">MDVRQSIHSAHAKTLDTQGLRNEFLVEEVFVADEYTMVYSHIDRIIVGGIMPITKTVSVGGEVGKQLGVSYFLERRELGVINIGGAGTITVDGQCYEIGHRDALYVGKGAKEVVFASIDTATPAKFYYNCAPAHTTYPTKKVTPDEVSPVTLGDNLTSNRRTINKYFVPDVLETCQLSMGLTELAPGNLWNTMPCHTHERRMEVYFYFNMDDDACVFHMMGQPQETRHIVMHNEQAVISPSWSIHSGVGTKAYTFIWGMVGENQVFDDMDHVAVKDLR</sequence>